<evidence type="ECO:0000255" key="1">
    <source>
        <dbReference type="HAMAP-Rule" id="MF_01366"/>
    </source>
</evidence>
<evidence type="ECO:0000305" key="2"/>
<gene>
    <name evidence="1" type="primary">rplM</name>
    <name type="ordered locus">PSEEN4507</name>
</gene>
<name>RL13_PSEE4</name>
<sequence>MKTFTAKPETVKREWFVVDAAGQTLGRLATEIASRLRGKHKPEYTPHVDTGDYIVVINAEQVRVTGAKSSDKMYYSHSGFPGGIKEINFEKLIAKAPERVIETAVKGMLPKNPLGRDMYRKLKVYAGAAHPHTAQQPQELKI</sequence>
<protein>
    <recommendedName>
        <fullName evidence="1">Large ribosomal subunit protein uL13</fullName>
    </recommendedName>
    <alternativeName>
        <fullName evidence="2">50S ribosomal protein L13</fullName>
    </alternativeName>
</protein>
<dbReference type="EMBL" id="CT573326">
    <property type="protein sequence ID" value="CAK17189.1"/>
    <property type="molecule type" value="Genomic_DNA"/>
</dbReference>
<dbReference type="RefSeq" id="WP_003260798.1">
    <property type="nucleotide sequence ID" value="NC_008027.1"/>
</dbReference>
<dbReference type="SMR" id="Q1I596"/>
<dbReference type="STRING" id="384676.PSEEN4507"/>
<dbReference type="GeneID" id="97169896"/>
<dbReference type="KEGG" id="pen:PSEEN4507"/>
<dbReference type="eggNOG" id="COG0102">
    <property type="taxonomic scope" value="Bacteria"/>
</dbReference>
<dbReference type="HOGENOM" id="CLU_082184_2_2_6"/>
<dbReference type="OrthoDB" id="9801330at2"/>
<dbReference type="Proteomes" id="UP000000658">
    <property type="component" value="Chromosome"/>
</dbReference>
<dbReference type="GO" id="GO:0022625">
    <property type="term" value="C:cytosolic large ribosomal subunit"/>
    <property type="evidence" value="ECO:0007669"/>
    <property type="project" value="TreeGrafter"/>
</dbReference>
<dbReference type="GO" id="GO:0003729">
    <property type="term" value="F:mRNA binding"/>
    <property type="evidence" value="ECO:0007669"/>
    <property type="project" value="TreeGrafter"/>
</dbReference>
<dbReference type="GO" id="GO:0003735">
    <property type="term" value="F:structural constituent of ribosome"/>
    <property type="evidence" value="ECO:0007669"/>
    <property type="project" value="InterPro"/>
</dbReference>
<dbReference type="GO" id="GO:0017148">
    <property type="term" value="P:negative regulation of translation"/>
    <property type="evidence" value="ECO:0007669"/>
    <property type="project" value="TreeGrafter"/>
</dbReference>
<dbReference type="GO" id="GO:0006412">
    <property type="term" value="P:translation"/>
    <property type="evidence" value="ECO:0007669"/>
    <property type="project" value="UniProtKB-UniRule"/>
</dbReference>
<dbReference type="CDD" id="cd00392">
    <property type="entry name" value="Ribosomal_L13"/>
    <property type="match status" value="1"/>
</dbReference>
<dbReference type="FunFam" id="3.90.1180.10:FF:000001">
    <property type="entry name" value="50S ribosomal protein L13"/>
    <property type="match status" value="1"/>
</dbReference>
<dbReference type="Gene3D" id="3.90.1180.10">
    <property type="entry name" value="Ribosomal protein L13"/>
    <property type="match status" value="1"/>
</dbReference>
<dbReference type="HAMAP" id="MF_01366">
    <property type="entry name" value="Ribosomal_uL13"/>
    <property type="match status" value="1"/>
</dbReference>
<dbReference type="InterPro" id="IPR005822">
    <property type="entry name" value="Ribosomal_uL13"/>
</dbReference>
<dbReference type="InterPro" id="IPR005823">
    <property type="entry name" value="Ribosomal_uL13_bac-type"/>
</dbReference>
<dbReference type="InterPro" id="IPR023563">
    <property type="entry name" value="Ribosomal_uL13_CS"/>
</dbReference>
<dbReference type="InterPro" id="IPR036899">
    <property type="entry name" value="Ribosomal_uL13_sf"/>
</dbReference>
<dbReference type="NCBIfam" id="TIGR01066">
    <property type="entry name" value="rplM_bact"/>
    <property type="match status" value="1"/>
</dbReference>
<dbReference type="PANTHER" id="PTHR11545:SF2">
    <property type="entry name" value="LARGE RIBOSOMAL SUBUNIT PROTEIN UL13M"/>
    <property type="match status" value="1"/>
</dbReference>
<dbReference type="PANTHER" id="PTHR11545">
    <property type="entry name" value="RIBOSOMAL PROTEIN L13"/>
    <property type="match status" value="1"/>
</dbReference>
<dbReference type="Pfam" id="PF00572">
    <property type="entry name" value="Ribosomal_L13"/>
    <property type="match status" value="1"/>
</dbReference>
<dbReference type="PIRSF" id="PIRSF002181">
    <property type="entry name" value="Ribosomal_L13"/>
    <property type="match status" value="1"/>
</dbReference>
<dbReference type="SUPFAM" id="SSF52161">
    <property type="entry name" value="Ribosomal protein L13"/>
    <property type="match status" value="1"/>
</dbReference>
<dbReference type="PROSITE" id="PS00783">
    <property type="entry name" value="RIBOSOMAL_L13"/>
    <property type="match status" value="1"/>
</dbReference>
<feature type="chain" id="PRO_1000055445" description="Large ribosomal subunit protein uL13">
    <location>
        <begin position="1"/>
        <end position="142"/>
    </location>
</feature>
<comment type="function">
    <text evidence="1">This protein is one of the early assembly proteins of the 50S ribosomal subunit, although it is not seen to bind rRNA by itself. It is important during the early stages of 50S assembly.</text>
</comment>
<comment type="subunit">
    <text evidence="1">Part of the 50S ribosomal subunit.</text>
</comment>
<comment type="similarity">
    <text evidence="1">Belongs to the universal ribosomal protein uL13 family.</text>
</comment>
<accession>Q1I596</accession>
<keyword id="KW-0687">Ribonucleoprotein</keyword>
<keyword id="KW-0689">Ribosomal protein</keyword>
<organism>
    <name type="scientific">Pseudomonas entomophila (strain L48)</name>
    <dbReference type="NCBI Taxonomy" id="384676"/>
    <lineage>
        <taxon>Bacteria</taxon>
        <taxon>Pseudomonadati</taxon>
        <taxon>Pseudomonadota</taxon>
        <taxon>Gammaproteobacteria</taxon>
        <taxon>Pseudomonadales</taxon>
        <taxon>Pseudomonadaceae</taxon>
        <taxon>Pseudomonas</taxon>
    </lineage>
</organism>
<reference key="1">
    <citation type="journal article" date="2006" name="Nat. Biotechnol.">
        <title>Complete genome sequence of the entomopathogenic and metabolically versatile soil bacterium Pseudomonas entomophila.</title>
        <authorList>
            <person name="Vodovar N."/>
            <person name="Vallenet D."/>
            <person name="Cruveiller S."/>
            <person name="Rouy Z."/>
            <person name="Barbe V."/>
            <person name="Acosta C."/>
            <person name="Cattolico L."/>
            <person name="Jubin C."/>
            <person name="Lajus A."/>
            <person name="Segurens B."/>
            <person name="Vacherie B."/>
            <person name="Wincker P."/>
            <person name="Weissenbach J."/>
            <person name="Lemaitre B."/>
            <person name="Medigue C."/>
            <person name="Boccard F."/>
        </authorList>
    </citation>
    <scope>NUCLEOTIDE SEQUENCE [LARGE SCALE GENOMIC DNA]</scope>
    <source>
        <strain>L48</strain>
    </source>
</reference>
<proteinExistence type="inferred from homology"/>